<evidence type="ECO:0000250" key="1">
    <source>
        <dbReference type="UniProtKB" id="P28660"/>
    </source>
</evidence>
<evidence type="ECO:0000255" key="2"/>
<evidence type="ECO:0000256" key="3">
    <source>
        <dbReference type="SAM" id="MobiDB-lite"/>
    </source>
</evidence>
<evidence type="ECO:0000269" key="4">
    <source>
    </source>
</evidence>
<evidence type="ECO:0000269" key="5">
    <source>
    </source>
</evidence>
<evidence type="ECO:0000269" key="6">
    <source>
    </source>
</evidence>
<evidence type="ECO:0000303" key="7">
    <source>
    </source>
</evidence>
<evidence type="ECO:0000305" key="8"/>
<evidence type="ECO:0007744" key="9">
    <source>
    </source>
</evidence>
<evidence type="ECO:0007829" key="10">
    <source>
        <dbReference type="PDB" id="3P8C"/>
    </source>
</evidence>
<evidence type="ECO:0007829" key="11">
    <source>
        <dbReference type="PDB" id="4N78"/>
    </source>
</evidence>
<evidence type="ECO:0007829" key="12">
    <source>
        <dbReference type="PDB" id="7USC"/>
    </source>
</evidence>
<proteinExistence type="evidence at protein level"/>
<sequence>MSRSVLQPSQQKLAEKLTILNDRGVGMLTRLYNIKKACGDPKAKPSYLIDKNLESAVKFIVRKFPAVETRNNNQQLAQLQKEKSEILKNLALYYFTFVDVMEFKDHVCELLNTIDVCQVFFDITVNFDLTKNYLDLIITYTTLMILLSRIEERKAIIGLYNYAHEMTHGASDREYPRLGQMIVDYENPLKKMMEEFVPHSKSLSDALISLQMVYPRRNLSADQWRNAQLLSLISAPSTMLNPAQSDTMPCEYLSLDAMEKWIIFGFILCHGILNTDATALNLWKLALQSSSCLSLFRDEVFHIHKAAEDLFVNIRGYNKRINDIRECKEAAVSHAGSMHRERRKFLRSALKELATVLSDQPGLLGPKALFVFMALSFARDEIIWLLRHADNMPKKSADDFIDKHIAELIFYMEELRAHVRKYGPVMQRYYVQYLSGFDAVVLNELVQNLSVCPEDESIIMSSFVNTMTSLSVKQVEDGEVFDFRGMRLDWFRLQAYTSVSKASLGLADHRELGKMMNTIIFHTKMVDSLVEMLVETSDLSIFCFYSRAFEKMFQQCLELPSQSRYSIAFPLLCTHFMSCTHELCPEERHHIGDRSLSLCNMFLDEMAKQARNLITDICTEQCTLSDQLLPKHCAKTISQAVNKKSKKQTGKKGEPEREKPGVESMRKNRLVVTNLDKLHTALSELCFSINYVPNMVVWEHTFTPREYLTSHLEIRFTKSIVGMTMYNQATQEIAKPSELLTSVRAYMTVLQSIENYVQIDITRVFNNVLLQQTQHLDSHGEPTITSLYTNWYLETLLRQVSNGHIAYFPAMKAFVNLPTENELTFNAEEYSDISEMRSLSELLGPYGMKFLSESLMWHISSQVAELKKLVVENVDVLTQMRTSFDKPDQMAALFKRLSSVDSVLKRMTIIGVILSFRSLAQEALRDVLSYHIPFLVSSIEDFKDHIPRETDMKVAMNVYELSSAAGLPCEIDPALVVALSSQKSENISPEEEYKIACLLMVFVAVSLPTLASNVMSQYSPAIEGHCNNIHCLAKAINQIAAALFTIHKGSIEDRLKEFLALASSSLLKIGQETDKTTTRNRESVYLLLDMIVQESPFLTMDLLESCFPYVLLRNAYHAVYKQSVTSSA</sequence>
<comment type="function">
    <text evidence="1">Part of the WAVE complex that regulates lamellipodia formation. The WAVE complex regulates actin filament reorganization via its interaction with the Arp2/3 complex. Actin remodeling activity is regulated by RAC1. As component of the WAVE1 complex, required for BDNF-NTRK2 endocytic trafficking and signaling from early endosomes.</text>
</comment>
<comment type="subunit">
    <text evidence="1 6">Component of the WAVE1 complex composed of ABI2, CYFIP1 or CYFIP2, BRK1, NCKAP1 and WASF1/WAVE1. Within the complex, a heterodimer containing NCKAP1 and CYFIP1 interacts with a heterotrimer formed by WAVE1, ABI2 and BRK1. Component of the WAVE2 complex composed of ABI1, CYFIP1/SRA1, NCKAP1/NAP1 and WASF2/WAVE2. CYFIP2 binds to activated RAC1 which causes the complex to dissociate, releasing activated WASF1. The complex can also be activated by NCK1. Associates preferentially with the first SH3 domain of NCK. Interacts with NYAP1, NYAP2 and MYO16 (By similarity). Interacts with TMEM132D (PubMed:33726789).</text>
</comment>
<comment type="subunit">
    <text evidence="4">(Microbial infection) Interacts with human cytomegalovirus protein UL135.</text>
</comment>
<comment type="interaction">
    <interactant intactId="EBI-389845">
        <id>Q9Y2A7</id>
    </interactant>
    <interactant intactId="EBI-375446">
        <id>Q8IZP0</id>
        <label>ABI1</label>
    </interactant>
    <organismsDiffer>false</organismsDiffer>
    <experiments>8</experiments>
</comment>
<comment type="interaction">
    <interactant intactId="EBI-389845">
        <id>Q9Y2A7</id>
    </interactant>
    <interactant intactId="EBI-21535880">
        <id>Q92870-2</id>
        <label>APBB2</label>
    </interactant>
    <organismsDiffer>false</organismsDiffer>
    <experiments>3</experiments>
</comment>
<comment type="interaction">
    <interactant intactId="EBI-389845">
        <id>Q9Y2A7</id>
    </interactant>
    <interactant intactId="EBI-1048143">
        <id>Q7L576</id>
        <label>CYFIP1</label>
    </interactant>
    <organismsDiffer>false</organismsDiffer>
    <experiments>8</experiments>
</comment>
<comment type="subcellular location">
    <subcellularLocation>
        <location evidence="1">Cell membrane</location>
        <topology evidence="1">Single-pass membrane protein</topology>
        <orientation evidence="1">Cytoplasmic side</orientation>
    </subcellularLocation>
    <subcellularLocation>
        <location evidence="1">Cell projection</location>
        <location evidence="1">Lamellipodium membrane</location>
        <topology evidence="1">Single-pass membrane protein</topology>
        <orientation evidence="1">Cytoplasmic side</orientation>
    </subcellularLocation>
    <text evidence="1">At the interface between the lamellipodial actin meshwork and the membrane.</text>
</comment>
<comment type="alternative products">
    <event type="alternative splicing"/>
    <isoform>
        <id>Q9Y2A7-1</id>
        <name>1</name>
        <sequence type="displayed"/>
    </isoform>
    <isoform>
        <id>Q9Y2A7-2</id>
        <name>2</name>
        <sequence type="described" ref="VSP_036558"/>
    </isoform>
</comment>
<comment type="tissue specificity">
    <text evidence="5">Expressed in all tissues examined except peripheral blood leukocytes, with highest expression in brain, heart, and skeletal muscle. Expressed in cells of various brain regions including Purkinje cells and dentate nucleus of the cerebellum, CA4 region and dentate gyrus of the hippocampus, and in frontal gray and white matter (PubMed:28940097).</text>
</comment>
<comment type="similarity">
    <text evidence="8">Belongs to the HEM-1/HEM-2 family.</text>
</comment>
<comment type="sequence caution" evidence="8">
    <conflict type="erroneous initiation">
        <sequence resource="EMBL-CDS" id="BAA25513"/>
    </conflict>
    <text>Extended N-terminus.</text>
</comment>
<keyword id="KW-0002">3D-structure</keyword>
<keyword id="KW-0007">Acetylation</keyword>
<keyword id="KW-0025">Alternative splicing</keyword>
<keyword id="KW-1003">Cell membrane</keyword>
<keyword id="KW-0966">Cell projection</keyword>
<keyword id="KW-0945">Host-virus interaction</keyword>
<keyword id="KW-0472">Membrane</keyword>
<keyword id="KW-1267">Proteomics identification</keyword>
<keyword id="KW-1185">Reference proteome</keyword>
<keyword id="KW-0812">Transmembrane</keyword>
<keyword id="KW-1133">Transmembrane helix</keyword>
<organism>
    <name type="scientific">Homo sapiens</name>
    <name type="common">Human</name>
    <dbReference type="NCBI Taxonomy" id="9606"/>
    <lineage>
        <taxon>Eukaryota</taxon>
        <taxon>Metazoa</taxon>
        <taxon>Chordata</taxon>
        <taxon>Craniata</taxon>
        <taxon>Vertebrata</taxon>
        <taxon>Euteleostomi</taxon>
        <taxon>Mammalia</taxon>
        <taxon>Eutheria</taxon>
        <taxon>Euarchontoglires</taxon>
        <taxon>Primates</taxon>
        <taxon>Haplorrhini</taxon>
        <taxon>Catarrhini</taxon>
        <taxon>Hominidae</taxon>
        <taxon>Homo</taxon>
    </lineage>
</organism>
<name>NCKP1_HUMAN</name>
<feature type="initiator methionine" description="Removed" evidence="9">
    <location>
        <position position="1"/>
    </location>
</feature>
<feature type="chain" id="PRO_0000216172" description="Nck-associated protein 1">
    <location>
        <begin position="2"/>
        <end position="1128"/>
    </location>
</feature>
<feature type="transmembrane region" description="Helical" evidence="2">
    <location>
        <begin position="995"/>
        <end position="1015"/>
    </location>
</feature>
<feature type="region of interest" description="Disordered" evidence="3">
    <location>
        <begin position="640"/>
        <end position="665"/>
    </location>
</feature>
<feature type="compositionally biased region" description="Basic and acidic residues" evidence="3">
    <location>
        <begin position="651"/>
        <end position="665"/>
    </location>
</feature>
<feature type="modified residue" description="N-acetylserine" evidence="9">
    <location>
        <position position="2"/>
    </location>
</feature>
<feature type="splice variant" id="VSP_036558" description="In isoform 2." evidence="7">
    <original>K</original>
    <variation>KQGQVWK</variation>
    <location>
        <position position="36"/>
    </location>
</feature>
<feature type="sequence variant" id="VAR_084649" description="Found in a patient with intellectual disability; uncertain significance." evidence="5">
    <location>
        <begin position="1094"/>
        <end position="1128"/>
    </location>
</feature>
<feature type="helix" evidence="10">
    <location>
        <begin position="8"/>
        <end position="10"/>
    </location>
</feature>
<feature type="helix" evidence="10">
    <location>
        <begin position="13"/>
        <end position="39"/>
    </location>
</feature>
<feature type="turn" evidence="10">
    <location>
        <begin position="41"/>
        <end position="43"/>
    </location>
</feature>
<feature type="helix" evidence="10">
    <location>
        <begin position="46"/>
        <end position="48"/>
    </location>
</feature>
<feature type="turn" evidence="10">
    <location>
        <begin position="51"/>
        <end position="53"/>
    </location>
</feature>
<feature type="helix" evidence="10">
    <location>
        <begin position="54"/>
        <end position="63"/>
    </location>
</feature>
<feature type="strand" evidence="12">
    <location>
        <begin position="74"/>
        <end position="76"/>
    </location>
</feature>
<feature type="helix" evidence="10">
    <location>
        <begin position="77"/>
        <end position="81"/>
    </location>
</feature>
<feature type="helix" evidence="10">
    <location>
        <begin position="83"/>
        <end position="117"/>
    </location>
</feature>
<feature type="turn" evidence="10">
    <location>
        <begin position="123"/>
        <end position="125"/>
    </location>
</feature>
<feature type="helix" evidence="10">
    <location>
        <begin position="127"/>
        <end position="148"/>
    </location>
</feature>
<feature type="helix" evidence="10">
    <location>
        <begin position="153"/>
        <end position="165"/>
    </location>
</feature>
<feature type="strand" evidence="10">
    <location>
        <begin position="168"/>
        <end position="170"/>
    </location>
</feature>
<feature type="helix" evidence="10">
    <location>
        <begin position="175"/>
        <end position="184"/>
    </location>
</feature>
<feature type="helix" evidence="10">
    <location>
        <begin position="188"/>
        <end position="195"/>
    </location>
</feature>
<feature type="turn" evidence="10">
    <location>
        <begin position="196"/>
        <end position="199"/>
    </location>
</feature>
<feature type="helix" evidence="10">
    <location>
        <begin position="200"/>
        <end position="208"/>
    </location>
</feature>
<feature type="helix" evidence="10">
    <location>
        <begin position="209"/>
        <end position="212"/>
    </location>
</feature>
<feature type="helix" evidence="10">
    <location>
        <begin position="214"/>
        <end position="217"/>
    </location>
</feature>
<feature type="helix" evidence="10">
    <location>
        <begin position="221"/>
        <end position="226"/>
    </location>
</feature>
<feature type="turn" evidence="10">
    <location>
        <begin position="227"/>
        <end position="230"/>
    </location>
</feature>
<feature type="strand" evidence="10">
    <location>
        <begin position="232"/>
        <end position="235"/>
    </location>
</feature>
<feature type="helix" evidence="10">
    <location>
        <begin position="236"/>
        <end position="238"/>
    </location>
</feature>
<feature type="strand" evidence="11">
    <location>
        <begin position="239"/>
        <end position="241"/>
    </location>
</feature>
<feature type="helix" evidence="10">
    <location>
        <begin position="248"/>
        <end position="252"/>
    </location>
</feature>
<feature type="helix" evidence="10">
    <location>
        <begin position="255"/>
        <end position="268"/>
    </location>
</feature>
<feature type="helix" evidence="10">
    <location>
        <begin position="271"/>
        <end position="275"/>
    </location>
</feature>
<feature type="helix" evidence="10">
    <location>
        <begin position="277"/>
        <end position="287"/>
    </location>
</feature>
<feature type="strand" evidence="10">
    <location>
        <begin position="291"/>
        <end position="296"/>
    </location>
</feature>
<feature type="strand" evidence="10">
    <location>
        <begin position="299"/>
        <end position="302"/>
    </location>
</feature>
<feature type="helix" evidence="10">
    <location>
        <begin position="303"/>
        <end position="311"/>
    </location>
</feature>
<feature type="helix" evidence="10">
    <location>
        <begin position="315"/>
        <end position="317"/>
    </location>
</feature>
<feature type="helix" evidence="10">
    <location>
        <begin position="320"/>
        <end position="359"/>
    </location>
</feature>
<feature type="helix" evidence="10">
    <location>
        <begin position="361"/>
        <end position="364"/>
    </location>
</feature>
<feature type="turn" evidence="10">
    <location>
        <begin position="365"/>
        <end position="367"/>
    </location>
</feature>
<feature type="helix" evidence="10">
    <location>
        <begin position="368"/>
        <end position="391"/>
    </location>
</feature>
<feature type="turn" evidence="10">
    <location>
        <begin position="397"/>
        <end position="400"/>
    </location>
</feature>
<feature type="helix" evidence="10">
    <location>
        <begin position="405"/>
        <end position="421"/>
    </location>
</feature>
<feature type="helix" evidence="10">
    <location>
        <begin position="423"/>
        <end position="436"/>
    </location>
</feature>
<feature type="helix" evidence="10">
    <location>
        <begin position="438"/>
        <end position="446"/>
    </location>
</feature>
<feature type="helix" evidence="10">
    <location>
        <begin position="454"/>
        <end position="468"/>
    </location>
</feature>
<feature type="helix" evidence="10">
    <location>
        <begin position="472"/>
        <end position="476"/>
    </location>
</feature>
<feature type="helix" evidence="10">
    <location>
        <begin position="484"/>
        <end position="498"/>
    </location>
</feature>
<feature type="strand" evidence="12">
    <location>
        <begin position="499"/>
        <end position="501"/>
    </location>
</feature>
<feature type="helix" evidence="10">
    <location>
        <begin position="506"/>
        <end position="508"/>
    </location>
</feature>
<feature type="helix" evidence="10">
    <location>
        <begin position="510"/>
        <end position="527"/>
    </location>
</feature>
<feature type="helix" evidence="10">
    <location>
        <begin position="529"/>
        <end position="537"/>
    </location>
</feature>
<feature type="helix" evidence="10">
    <location>
        <begin position="540"/>
        <end position="544"/>
    </location>
</feature>
<feature type="helix" evidence="10">
    <location>
        <begin position="546"/>
        <end position="558"/>
    </location>
</feature>
<feature type="helix" evidence="10">
    <location>
        <begin position="560"/>
        <end position="563"/>
    </location>
</feature>
<feature type="helix" evidence="10">
    <location>
        <begin position="564"/>
        <end position="567"/>
    </location>
</feature>
<feature type="helix" evidence="10">
    <location>
        <begin position="568"/>
        <end position="572"/>
    </location>
</feature>
<feature type="helix" evidence="10">
    <location>
        <begin position="573"/>
        <end position="579"/>
    </location>
</feature>
<feature type="helix" evidence="10">
    <location>
        <begin position="585"/>
        <end position="587"/>
    </location>
</feature>
<feature type="helix" evidence="10">
    <location>
        <begin position="588"/>
        <end position="626"/>
    </location>
</feature>
<feature type="helix" evidence="10">
    <location>
        <begin position="630"/>
        <end position="633"/>
    </location>
</feature>
<feature type="helix" evidence="10">
    <location>
        <begin position="634"/>
        <end position="640"/>
    </location>
</feature>
<feature type="helix" evidence="10">
    <location>
        <begin position="662"/>
        <end position="664"/>
    </location>
</feature>
<feature type="helix" evidence="10">
    <location>
        <begin position="674"/>
        <end position="689"/>
    </location>
</feature>
<feature type="strand" evidence="10">
    <location>
        <begin position="695"/>
        <end position="697"/>
    </location>
</feature>
<feature type="strand" evidence="10">
    <location>
        <begin position="700"/>
        <end position="702"/>
    </location>
</feature>
<feature type="helix" evidence="10">
    <location>
        <begin position="704"/>
        <end position="723"/>
    </location>
</feature>
<feature type="turn" evidence="10">
    <location>
        <begin position="728"/>
        <end position="731"/>
    </location>
</feature>
<feature type="helix" evidence="10">
    <location>
        <begin position="736"/>
        <end position="752"/>
    </location>
</feature>
<feature type="helix" evidence="10">
    <location>
        <begin position="753"/>
        <end position="755"/>
    </location>
</feature>
<feature type="helix" evidence="10">
    <location>
        <begin position="761"/>
        <end position="771"/>
    </location>
</feature>
<feature type="strand" evidence="10">
    <location>
        <begin position="774"/>
        <end position="776"/>
    </location>
</feature>
<feature type="helix" evidence="10">
    <location>
        <begin position="784"/>
        <end position="794"/>
    </location>
</feature>
<feature type="helix" evidence="10">
    <location>
        <begin position="796"/>
        <end position="801"/>
    </location>
</feature>
<feature type="strand" evidence="10">
    <location>
        <begin position="804"/>
        <end position="808"/>
    </location>
</feature>
<feature type="turn" evidence="10">
    <location>
        <begin position="809"/>
        <end position="812"/>
    </location>
</feature>
<feature type="strand" evidence="10">
    <location>
        <begin position="813"/>
        <end position="816"/>
    </location>
</feature>
<feature type="strand" evidence="10">
    <location>
        <begin position="818"/>
        <end position="820"/>
    </location>
</feature>
<feature type="helix" evidence="10">
    <location>
        <begin position="828"/>
        <end position="831"/>
    </location>
</feature>
<feature type="helix" evidence="10">
    <location>
        <begin position="833"/>
        <end position="871"/>
    </location>
</feature>
<feature type="helix" evidence="10">
    <location>
        <begin position="874"/>
        <end position="882"/>
    </location>
</feature>
<feature type="helix" evidence="10">
    <location>
        <begin position="887"/>
        <end position="894"/>
    </location>
</feature>
<feature type="helix" evidence="10">
    <location>
        <begin position="900"/>
        <end position="931"/>
    </location>
</feature>
<feature type="helix" evidence="10">
    <location>
        <begin position="933"/>
        <end position="944"/>
    </location>
</feature>
<feature type="helix" evidence="10">
    <location>
        <begin position="955"/>
        <end position="964"/>
    </location>
</feature>
<feature type="helix" evidence="10">
    <location>
        <begin position="973"/>
        <end position="979"/>
    </location>
</feature>
<feature type="helix" evidence="10">
    <location>
        <begin position="989"/>
        <end position="1006"/>
    </location>
</feature>
<feature type="helix" evidence="10">
    <location>
        <begin position="1007"/>
        <end position="1012"/>
    </location>
</feature>
<feature type="helix" evidence="10">
    <location>
        <begin position="1014"/>
        <end position="1016"/>
    </location>
</feature>
<feature type="turn" evidence="10">
    <location>
        <begin position="1020"/>
        <end position="1023"/>
    </location>
</feature>
<feature type="helix" evidence="10">
    <location>
        <begin position="1029"/>
        <end position="1031"/>
    </location>
</feature>
<feature type="helix" evidence="10">
    <location>
        <begin position="1032"/>
        <end position="1046"/>
    </location>
</feature>
<feature type="helix" evidence="10">
    <location>
        <begin position="1051"/>
        <end position="1068"/>
    </location>
</feature>
<feature type="helix" evidence="11">
    <location>
        <begin position="1069"/>
        <end position="1071"/>
    </location>
</feature>
<feature type="turn" evidence="10">
    <location>
        <begin position="1075"/>
        <end position="1080"/>
    </location>
</feature>
<feature type="helix" evidence="10">
    <location>
        <begin position="1081"/>
        <end position="1094"/>
    </location>
</feature>
<feature type="helix" evidence="10">
    <location>
        <begin position="1100"/>
        <end position="1106"/>
    </location>
</feature>
<feature type="helix" evidence="10">
    <location>
        <begin position="1109"/>
        <end position="1120"/>
    </location>
</feature>
<reference key="1">
    <citation type="journal article" date="2000" name="Genomics">
        <title>Molecular cloning of a novel apoptosis-related gene, human Nap1 (NCKAP1), and its possible relation to Alzheimer disease.</title>
        <authorList>
            <person name="Suzuki T."/>
            <person name="Nishiyama K."/>
            <person name="Yamamoto A."/>
            <person name="Inazawa J."/>
            <person name="Iwaki T."/>
            <person name="Yamada T."/>
            <person name="Kanazawa I."/>
            <person name="Sakaki Y."/>
        </authorList>
    </citation>
    <scope>NUCLEOTIDE SEQUENCE [MRNA] (ISOFORM 1)</scope>
    <source>
        <tissue>Brain</tissue>
    </source>
</reference>
<reference key="2">
    <citation type="journal article" date="1998" name="DNA Res.">
        <title>Prediction of the coding sequences of unidentified human genes. IX. The complete sequences of 100 new cDNA clones from brain which can code for large proteins in vitro.</title>
        <authorList>
            <person name="Nagase T."/>
            <person name="Ishikawa K."/>
            <person name="Miyajima N."/>
            <person name="Tanaka A."/>
            <person name="Kotani H."/>
            <person name="Nomura N."/>
            <person name="Ohara O."/>
        </authorList>
    </citation>
    <scope>NUCLEOTIDE SEQUENCE [LARGE SCALE MRNA] (ISOFORM 2)</scope>
    <source>
        <tissue>Brain</tissue>
    </source>
</reference>
<reference key="3">
    <citation type="journal article" date="2004" name="Nat. Genet.">
        <title>Complete sequencing and characterization of 21,243 full-length human cDNAs.</title>
        <authorList>
            <person name="Ota T."/>
            <person name="Suzuki Y."/>
            <person name="Nishikawa T."/>
            <person name="Otsuki T."/>
            <person name="Sugiyama T."/>
            <person name="Irie R."/>
            <person name="Wakamatsu A."/>
            <person name="Hayashi K."/>
            <person name="Sato H."/>
            <person name="Nagai K."/>
            <person name="Kimura K."/>
            <person name="Makita H."/>
            <person name="Sekine M."/>
            <person name="Obayashi M."/>
            <person name="Nishi T."/>
            <person name="Shibahara T."/>
            <person name="Tanaka T."/>
            <person name="Ishii S."/>
            <person name="Yamamoto J."/>
            <person name="Saito K."/>
            <person name="Kawai Y."/>
            <person name="Isono Y."/>
            <person name="Nakamura Y."/>
            <person name="Nagahari K."/>
            <person name="Murakami K."/>
            <person name="Yasuda T."/>
            <person name="Iwayanagi T."/>
            <person name="Wagatsuma M."/>
            <person name="Shiratori A."/>
            <person name="Sudo H."/>
            <person name="Hosoiri T."/>
            <person name="Kaku Y."/>
            <person name="Kodaira H."/>
            <person name="Kondo H."/>
            <person name="Sugawara M."/>
            <person name="Takahashi M."/>
            <person name="Kanda K."/>
            <person name="Yokoi T."/>
            <person name="Furuya T."/>
            <person name="Kikkawa E."/>
            <person name="Omura Y."/>
            <person name="Abe K."/>
            <person name="Kamihara K."/>
            <person name="Katsuta N."/>
            <person name="Sato K."/>
            <person name="Tanikawa M."/>
            <person name="Yamazaki M."/>
            <person name="Ninomiya K."/>
            <person name="Ishibashi T."/>
            <person name="Yamashita H."/>
            <person name="Murakawa K."/>
            <person name="Fujimori K."/>
            <person name="Tanai H."/>
            <person name="Kimata M."/>
            <person name="Watanabe M."/>
            <person name="Hiraoka S."/>
            <person name="Chiba Y."/>
            <person name="Ishida S."/>
            <person name="Ono Y."/>
            <person name="Takiguchi S."/>
            <person name="Watanabe S."/>
            <person name="Yosida M."/>
            <person name="Hotuta T."/>
            <person name="Kusano J."/>
            <person name="Kanehori K."/>
            <person name="Takahashi-Fujii A."/>
            <person name="Hara H."/>
            <person name="Tanase T.-O."/>
            <person name="Nomura Y."/>
            <person name="Togiya S."/>
            <person name="Komai F."/>
            <person name="Hara R."/>
            <person name="Takeuchi K."/>
            <person name="Arita M."/>
            <person name="Imose N."/>
            <person name="Musashino K."/>
            <person name="Yuuki H."/>
            <person name="Oshima A."/>
            <person name="Sasaki N."/>
            <person name="Aotsuka S."/>
            <person name="Yoshikawa Y."/>
            <person name="Matsunawa H."/>
            <person name="Ichihara T."/>
            <person name="Shiohata N."/>
            <person name="Sano S."/>
            <person name="Moriya S."/>
            <person name="Momiyama H."/>
            <person name="Satoh N."/>
            <person name="Takami S."/>
            <person name="Terashima Y."/>
            <person name="Suzuki O."/>
            <person name="Nakagawa S."/>
            <person name="Senoh A."/>
            <person name="Mizoguchi H."/>
            <person name="Goto Y."/>
            <person name="Shimizu F."/>
            <person name="Wakebe H."/>
            <person name="Hishigaki H."/>
            <person name="Watanabe T."/>
            <person name="Sugiyama A."/>
            <person name="Takemoto M."/>
            <person name="Kawakami B."/>
            <person name="Yamazaki M."/>
            <person name="Watanabe K."/>
            <person name="Kumagai A."/>
            <person name="Itakura S."/>
            <person name="Fukuzumi Y."/>
            <person name="Fujimori Y."/>
            <person name="Komiyama M."/>
            <person name="Tashiro H."/>
            <person name="Tanigami A."/>
            <person name="Fujiwara T."/>
            <person name="Ono T."/>
            <person name="Yamada K."/>
            <person name="Fujii Y."/>
            <person name="Ozaki K."/>
            <person name="Hirao M."/>
            <person name="Ohmori Y."/>
            <person name="Kawabata A."/>
            <person name="Hikiji T."/>
            <person name="Kobatake N."/>
            <person name="Inagaki H."/>
            <person name="Ikema Y."/>
            <person name="Okamoto S."/>
            <person name="Okitani R."/>
            <person name="Kawakami T."/>
            <person name="Noguchi S."/>
            <person name="Itoh T."/>
            <person name="Shigeta K."/>
            <person name="Senba T."/>
            <person name="Matsumura K."/>
            <person name="Nakajima Y."/>
            <person name="Mizuno T."/>
            <person name="Morinaga M."/>
            <person name="Sasaki M."/>
            <person name="Togashi T."/>
            <person name="Oyama M."/>
            <person name="Hata H."/>
            <person name="Watanabe M."/>
            <person name="Komatsu T."/>
            <person name="Mizushima-Sugano J."/>
            <person name="Satoh T."/>
            <person name="Shirai Y."/>
            <person name="Takahashi Y."/>
            <person name="Nakagawa K."/>
            <person name="Okumura K."/>
            <person name="Nagase T."/>
            <person name="Nomura N."/>
            <person name="Kikuchi H."/>
            <person name="Masuho Y."/>
            <person name="Yamashita R."/>
            <person name="Nakai K."/>
            <person name="Yada T."/>
            <person name="Nakamura Y."/>
            <person name="Ohara O."/>
            <person name="Isogai T."/>
            <person name="Sugano S."/>
        </authorList>
    </citation>
    <scope>NUCLEOTIDE SEQUENCE [LARGE SCALE MRNA] (ISOFORM 1)</scope>
    <source>
        <tissue>Trachea</tissue>
    </source>
</reference>
<reference key="4">
    <citation type="submission" date="2003-05" db="EMBL/GenBank/DDBJ databases">
        <title>Cloning of human full-length CDSs in BD Creator(TM) system donor vector.</title>
        <authorList>
            <person name="Kalnine N."/>
            <person name="Chen X."/>
            <person name="Rolfs A."/>
            <person name="Halleck A."/>
            <person name="Hines L."/>
            <person name="Eisenstein S."/>
            <person name="Koundinya M."/>
            <person name="Raphael J."/>
            <person name="Moreira D."/>
            <person name="Kelley T."/>
            <person name="LaBaer J."/>
            <person name="Lin Y."/>
            <person name="Phelan M."/>
            <person name="Farmer A."/>
        </authorList>
    </citation>
    <scope>NUCLEOTIDE SEQUENCE [LARGE SCALE MRNA] (ISOFORM 1)</scope>
</reference>
<reference key="5">
    <citation type="journal article" date="2005" name="Nature">
        <title>Generation and annotation of the DNA sequences of human chromosomes 2 and 4.</title>
        <authorList>
            <person name="Hillier L.W."/>
            <person name="Graves T.A."/>
            <person name="Fulton R.S."/>
            <person name="Fulton L.A."/>
            <person name="Pepin K.H."/>
            <person name="Minx P."/>
            <person name="Wagner-McPherson C."/>
            <person name="Layman D."/>
            <person name="Wylie K."/>
            <person name="Sekhon M."/>
            <person name="Becker M.C."/>
            <person name="Fewell G.A."/>
            <person name="Delehaunty K.D."/>
            <person name="Miner T.L."/>
            <person name="Nash W.E."/>
            <person name="Kremitzki C."/>
            <person name="Oddy L."/>
            <person name="Du H."/>
            <person name="Sun H."/>
            <person name="Bradshaw-Cordum H."/>
            <person name="Ali J."/>
            <person name="Carter J."/>
            <person name="Cordes M."/>
            <person name="Harris A."/>
            <person name="Isak A."/>
            <person name="van Brunt A."/>
            <person name="Nguyen C."/>
            <person name="Du F."/>
            <person name="Courtney L."/>
            <person name="Kalicki J."/>
            <person name="Ozersky P."/>
            <person name="Abbott S."/>
            <person name="Armstrong J."/>
            <person name="Belter E.A."/>
            <person name="Caruso L."/>
            <person name="Cedroni M."/>
            <person name="Cotton M."/>
            <person name="Davidson T."/>
            <person name="Desai A."/>
            <person name="Elliott G."/>
            <person name="Erb T."/>
            <person name="Fronick C."/>
            <person name="Gaige T."/>
            <person name="Haakenson W."/>
            <person name="Haglund K."/>
            <person name="Holmes A."/>
            <person name="Harkins R."/>
            <person name="Kim K."/>
            <person name="Kruchowski S.S."/>
            <person name="Strong C.M."/>
            <person name="Grewal N."/>
            <person name="Goyea E."/>
            <person name="Hou S."/>
            <person name="Levy A."/>
            <person name="Martinka S."/>
            <person name="Mead K."/>
            <person name="McLellan M.D."/>
            <person name="Meyer R."/>
            <person name="Randall-Maher J."/>
            <person name="Tomlinson C."/>
            <person name="Dauphin-Kohlberg S."/>
            <person name="Kozlowicz-Reilly A."/>
            <person name="Shah N."/>
            <person name="Swearengen-Shahid S."/>
            <person name="Snider J."/>
            <person name="Strong J.T."/>
            <person name="Thompson J."/>
            <person name="Yoakum M."/>
            <person name="Leonard S."/>
            <person name="Pearman C."/>
            <person name="Trani L."/>
            <person name="Radionenko M."/>
            <person name="Waligorski J.E."/>
            <person name="Wang C."/>
            <person name="Rock S.M."/>
            <person name="Tin-Wollam A.-M."/>
            <person name="Maupin R."/>
            <person name="Latreille P."/>
            <person name="Wendl M.C."/>
            <person name="Yang S.-P."/>
            <person name="Pohl C."/>
            <person name="Wallis J.W."/>
            <person name="Spieth J."/>
            <person name="Bieri T.A."/>
            <person name="Berkowicz N."/>
            <person name="Nelson J.O."/>
            <person name="Osborne J."/>
            <person name="Ding L."/>
            <person name="Meyer R."/>
            <person name="Sabo A."/>
            <person name="Shotland Y."/>
            <person name="Sinha P."/>
            <person name="Wohldmann P.E."/>
            <person name="Cook L.L."/>
            <person name="Hickenbotham M.T."/>
            <person name="Eldred J."/>
            <person name="Williams D."/>
            <person name="Jones T.A."/>
            <person name="She X."/>
            <person name="Ciccarelli F.D."/>
            <person name="Izaurralde E."/>
            <person name="Taylor J."/>
            <person name="Schmutz J."/>
            <person name="Myers R.M."/>
            <person name="Cox D.R."/>
            <person name="Huang X."/>
            <person name="McPherson J.D."/>
            <person name="Mardis E.R."/>
            <person name="Clifton S.W."/>
            <person name="Warren W.C."/>
            <person name="Chinwalla A.T."/>
            <person name="Eddy S.R."/>
            <person name="Marra M.A."/>
            <person name="Ovcharenko I."/>
            <person name="Furey T.S."/>
            <person name="Miller W."/>
            <person name="Eichler E.E."/>
            <person name="Bork P."/>
            <person name="Suyama M."/>
            <person name="Torrents D."/>
            <person name="Waterston R.H."/>
            <person name="Wilson R.K."/>
        </authorList>
    </citation>
    <scope>NUCLEOTIDE SEQUENCE [LARGE SCALE GENOMIC DNA]</scope>
</reference>
<reference key="6">
    <citation type="journal article" date="2004" name="Genome Res.">
        <title>The status, quality, and expansion of the NIH full-length cDNA project: the Mammalian Gene Collection (MGC).</title>
        <authorList>
            <consortium name="The MGC Project Team"/>
        </authorList>
    </citation>
    <scope>NUCLEOTIDE SEQUENCE [LARGE SCALE MRNA] (ISOFORM 1)</scope>
    <source>
        <tissue>Uterus</tissue>
    </source>
</reference>
<reference key="7">
    <citation type="journal article" date="2009" name="Anal. Chem.">
        <title>Lys-N and trypsin cover complementary parts of the phosphoproteome in a refined SCX-based approach.</title>
        <authorList>
            <person name="Gauci S."/>
            <person name="Helbig A.O."/>
            <person name="Slijper M."/>
            <person name="Krijgsveld J."/>
            <person name="Heck A.J."/>
            <person name="Mohammed S."/>
        </authorList>
    </citation>
    <scope>ACETYLATION [LARGE SCALE ANALYSIS] AT SER-2</scope>
    <scope>CLEAVAGE OF INITIATOR METHIONINE [LARGE SCALE ANALYSIS]</scope>
    <scope>IDENTIFICATION BY MASS SPECTROMETRY [LARGE SCALE ANALYSIS]</scope>
</reference>
<reference key="8">
    <citation type="journal article" date="2011" name="BMC Syst. Biol.">
        <title>Initial characterization of the human central proteome.</title>
        <authorList>
            <person name="Burkard T.R."/>
            <person name="Planyavsky M."/>
            <person name="Kaupe I."/>
            <person name="Breitwieser F.P."/>
            <person name="Buerckstuemmer T."/>
            <person name="Bennett K.L."/>
            <person name="Superti-Furga G."/>
            <person name="Colinge J."/>
        </authorList>
    </citation>
    <scope>IDENTIFICATION BY MASS SPECTROMETRY [LARGE SCALE ANALYSIS]</scope>
</reference>
<reference key="9">
    <citation type="journal article" date="2014" name="Cell Host Microbe">
        <title>HCMV pUL135 remodels the actin cytoskeleton to impair immune recognition of infected cells.</title>
        <authorList>
            <person name="Stanton R.J."/>
            <person name="Prod'homme V."/>
            <person name="Purbhoo M.A."/>
            <person name="Moore M."/>
            <person name="Aicheler R.J."/>
            <person name="Heinzmann M."/>
            <person name="Bailer S.M."/>
            <person name="Haas J."/>
            <person name="Antrobus R."/>
            <person name="Weekes M.P."/>
            <person name="Lehner P.J."/>
            <person name="Vojtesek B."/>
            <person name="Miners K.L."/>
            <person name="Man S."/>
            <person name="Wilkie G.S."/>
            <person name="Davison A.J."/>
            <person name="Wang E.C."/>
            <person name="Tomasec P."/>
            <person name="Wilkinson G.W."/>
        </authorList>
    </citation>
    <scope>INTERACTION WITH HUMAN CYTOMEGALOVIRUS PROTEIN UL135 (MICROBIAL INFECTION)</scope>
</reference>
<reference key="10">
    <citation type="journal article" date="2021" name="Mol. Brain">
        <title>The C. elegans homolog of human panic-disorder risk gene TMEM132D orchestrates neuronal morphogenesis through the WAVE-regulatory complex.</title>
        <authorList>
            <person name="Wang X."/>
            <person name="Jiang W."/>
            <person name="Luo S."/>
            <person name="Yang X."/>
            <person name="Wang C."/>
            <person name="Wang B."/>
            <person name="Dang Y."/>
            <person name="Shen Y."/>
            <person name="Ma D.K."/>
        </authorList>
    </citation>
    <scope>INTERACTION WITH TMEM132D</scope>
</reference>
<reference key="11">
    <citation type="journal article" date="2010" name="Nature">
        <title>Structure and control of the actin regulatory WAVE complex.</title>
        <authorList>
            <person name="Chen Z."/>
            <person name="Borek D."/>
            <person name="Padrick S.B."/>
            <person name="Gomez T.S."/>
            <person name="Metlagel Z."/>
            <person name="Ismail A.M."/>
            <person name="Umetani J."/>
            <person name="Billadeau D.D."/>
            <person name="Otwinowski Z."/>
            <person name="Rosen M.K."/>
        </authorList>
    </citation>
    <scope>X-RAY CRYSTALLOGRAPHY (2.29 ANGSTROMS) OF WAVE1 COMPLEX</scope>
    <scope>SUBUNIT</scope>
</reference>
<reference key="12">
    <citation type="journal article" date="2017" name="Hum. Genet.">
        <title>Expanding the genetic heterogeneity of intellectual disability.</title>
        <authorList>
            <person name="Anazi S."/>
            <person name="Maddirevula S."/>
            <person name="Salpietro V."/>
            <person name="Asi Y.T."/>
            <person name="Alsahli S."/>
            <person name="Alhashem A."/>
            <person name="Shamseldin H.E."/>
            <person name="AlZahrani F."/>
            <person name="Patel N."/>
            <person name="Ibrahim N."/>
            <person name="Abdulwahab F.M."/>
            <person name="Hashem M."/>
            <person name="Alhashmi N."/>
            <person name="Al Murshedi F."/>
            <person name="Al Kindy A."/>
            <person name="Alshaer A."/>
            <person name="Rumayyan A."/>
            <person name="Al Tala S."/>
            <person name="Kurdi W."/>
            <person name="Alsaman A."/>
            <person name="Alasmari A."/>
            <person name="Banu S."/>
            <person name="Sultan T."/>
            <person name="Saleh M.M."/>
            <person name="Alkuraya H."/>
            <person name="Salih M.A."/>
            <person name="Aldhalaan H."/>
            <person name="Ben-Omran T."/>
            <person name="Al Musafri F."/>
            <person name="Ali R."/>
            <person name="Suleiman J."/>
            <person name="Tabarki B."/>
            <person name="El-Hattab A.W."/>
            <person name="Bupp C."/>
            <person name="Alfadhel M."/>
            <person name="Al Tassan N."/>
            <person name="Monies D."/>
            <person name="Arold S.T."/>
            <person name="Abouelhoda M."/>
            <person name="Lashley T."/>
            <person name="Houlden H."/>
            <person name="Faqeih E."/>
            <person name="Alkuraya F.S."/>
        </authorList>
    </citation>
    <scope>VARIANT 1094-GLU--ALA-1128 DEL</scope>
    <scope>TISSUE SPECIFICITY</scope>
</reference>
<reference key="13">
    <citation type="journal article" date="2018" name="Hum. Genet.">
        <title>Correction to: Expanding the genetic heterogeneity of intellectual disability.</title>
        <authorList>
            <person name="Anazi S."/>
            <person name="Maddirevula S."/>
            <person name="Salpietro V."/>
            <person name="Asi Y.T."/>
            <person name="Alsahli S."/>
            <person name="Alhashem A."/>
            <person name="Shamseldin H.E."/>
            <person name="AlZahrani F."/>
            <person name="Patel N."/>
            <person name="Ibrahim N."/>
            <person name="Abdulwahab F.M."/>
            <person name="Hashem M."/>
            <person name="Alhashmi N."/>
            <person name="Al Murshedi F."/>
            <person name="Al Kindy A."/>
            <person name="Alshaer A."/>
            <person name="Rumayyan A."/>
            <person name="Al Tala S."/>
            <person name="Kurdi W."/>
            <person name="Alsaman A."/>
            <person name="Alasmari A."/>
            <person name="Banu S."/>
            <person name="Sultan T."/>
            <person name="Saleh M.M."/>
            <person name="Alkuraya H."/>
            <person name="Salih M.A."/>
            <person name="Aldhalaan H."/>
            <person name="Ben-Omran T."/>
            <person name="Al Musafri F."/>
            <person name="Ali R."/>
            <person name="Suleiman J."/>
            <person name="Tabarki B."/>
            <person name="El-Hattab A.W."/>
            <person name="Bupp C."/>
            <person name="Alfadhel M."/>
            <person name="Al Tassan N."/>
            <person name="Monies D."/>
            <person name="Arold S.T."/>
            <person name="Abouelhoda M."/>
            <person name="Lashley T."/>
            <person name="Houlden H."/>
            <person name="Faqeih E."/>
            <person name="Alkuraya F.S."/>
        </authorList>
    </citation>
    <scope>ERRATUM OF PUBMED:28940097</scope>
</reference>
<accession>Q9Y2A7</accession>
<accession>O60329</accession>
<accession>Q53QN5</accession>
<accession>Q53S94</accession>
<accession>Q53Y35</accession>
<dbReference type="EMBL" id="AB014509">
    <property type="protein sequence ID" value="BAA77295.1"/>
    <property type="molecule type" value="mRNA"/>
</dbReference>
<dbReference type="EMBL" id="AB011159">
    <property type="protein sequence ID" value="BAA25513.2"/>
    <property type="status" value="ALT_INIT"/>
    <property type="molecule type" value="mRNA"/>
</dbReference>
<dbReference type="EMBL" id="AK292914">
    <property type="protein sequence ID" value="BAF85603.1"/>
    <property type="molecule type" value="mRNA"/>
</dbReference>
<dbReference type="EMBL" id="BT007033">
    <property type="protein sequence ID" value="AAP35681.1"/>
    <property type="molecule type" value="mRNA"/>
</dbReference>
<dbReference type="EMBL" id="AC108514">
    <property type="protein sequence ID" value="AAX93118.1"/>
    <property type="molecule type" value="Genomic_DNA"/>
</dbReference>
<dbReference type="EMBL" id="AC064871">
    <property type="protein sequence ID" value="AAY24196.1"/>
    <property type="molecule type" value="Genomic_DNA"/>
</dbReference>
<dbReference type="EMBL" id="BC015025">
    <property type="protein sequence ID" value="AAH15025.1"/>
    <property type="molecule type" value="mRNA"/>
</dbReference>
<dbReference type="CCDS" id="CCDS2287.1">
    <molecule id="Q9Y2A7-1"/>
</dbReference>
<dbReference type="CCDS" id="CCDS2288.1">
    <molecule id="Q9Y2A7-2"/>
</dbReference>
<dbReference type="RefSeq" id="NP_038464.1">
    <molecule id="Q9Y2A7-1"/>
    <property type="nucleotide sequence ID" value="NM_013436.5"/>
</dbReference>
<dbReference type="RefSeq" id="NP_995314.1">
    <molecule id="Q9Y2A7-2"/>
    <property type="nucleotide sequence ID" value="NM_205842.3"/>
</dbReference>
<dbReference type="PDB" id="3P8C">
    <property type="method" value="X-ray"/>
    <property type="resolution" value="2.29 A"/>
    <property type="chains" value="B=1-1128"/>
</dbReference>
<dbReference type="PDB" id="4N78">
    <property type="method" value="X-ray"/>
    <property type="resolution" value="2.43 A"/>
    <property type="chains" value="B=1-1128"/>
</dbReference>
<dbReference type="PDB" id="7USC">
    <property type="method" value="EM"/>
    <property type="resolution" value="3.00 A"/>
    <property type="chains" value="B=1-1128"/>
</dbReference>
<dbReference type="PDB" id="7USD">
    <property type="method" value="EM"/>
    <property type="resolution" value="3.00 A"/>
    <property type="chains" value="B=1-1128"/>
</dbReference>
<dbReference type="PDB" id="7USE">
    <property type="method" value="EM"/>
    <property type="resolution" value="3.00 A"/>
    <property type="chains" value="B=1-1128"/>
</dbReference>
<dbReference type="PDBsum" id="3P8C"/>
<dbReference type="PDBsum" id="4N78"/>
<dbReference type="PDBsum" id="7USC"/>
<dbReference type="PDBsum" id="7USD"/>
<dbReference type="PDBsum" id="7USE"/>
<dbReference type="EMDB" id="EMD-26732"/>
<dbReference type="EMDB" id="EMD-26733"/>
<dbReference type="EMDB" id="EMD-26734"/>
<dbReference type="SMR" id="Q9Y2A7"/>
<dbReference type="BioGRID" id="116003">
    <property type="interactions" value="187"/>
</dbReference>
<dbReference type="CORUM" id="Q9Y2A7"/>
<dbReference type="DIP" id="DIP-31119N"/>
<dbReference type="FunCoup" id="Q9Y2A7">
    <property type="interactions" value="1948"/>
</dbReference>
<dbReference type="IntAct" id="Q9Y2A7">
    <property type="interactions" value="107"/>
</dbReference>
<dbReference type="MINT" id="Q9Y2A7"/>
<dbReference type="STRING" id="9606.ENSP00000354251"/>
<dbReference type="GlyGen" id="Q9Y2A7">
    <property type="glycosylation" value="1 site, 1 O-linked glycan (1 site)"/>
</dbReference>
<dbReference type="iPTMnet" id="Q9Y2A7"/>
<dbReference type="MetOSite" id="Q9Y2A7"/>
<dbReference type="PhosphoSitePlus" id="Q9Y2A7"/>
<dbReference type="SwissPalm" id="Q9Y2A7"/>
<dbReference type="BioMuta" id="NCKAP1"/>
<dbReference type="DMDM" id="12643947"/>
<dbReference type="jPOST" id="Q9Y2A7"/>
<dbReference type="MassIVE" id="Q9Y2A7"/>
<dbReference type="PaxDb" id="9606-ENSP00000354251"/>
<dbReference type="PeptideAtlas" id="Q9Y2A7"/>
<dbReference type="ProteomicsDB" id="85712">
    <molecule id="Q9Y2A7-1"/>
</dbReference>
<dbReference type="ProteomicsDB" id="85713">
    <molecule id="Q9Y2A7-2"/>
</dbReference>
<dbReference type="Pumba" id="Q9Y2A7"/>
<dbReference type="Antibodypedia" id="19761">
    <property type="antibodies" value="205 antibodies from 32 providers"/>
</dbReference>
<dbReference type="DNASU" id="10787"/>
<dbReference type="Ensembl" id="ENST00000360982.2">
    <molecule id="Q9Y2A7-2"/>
    <property type="protein sequence ID" value="ENSP00000354251.2"/>
    <property type="gene ID" value="ENSG00000061676.16"/>
</dbReference>
<dbReference type="Ensembl" id="ENST00000361354.9">
    <molecule id="Q9Y2A7-1"/>
    <property type="protein sequence ID" value="ENSP00000355348.3"/>
    <property type="gene ID" value="ENSG00000061676.16"/>
</dbReference>
<dbReference type="GeneID" id="10787"/>
<dbReference type="KEGG" id="hsa:10787"/>
<dbReference type="MANE-Select" id="ENST00000361354.9">
    <property type="protein sequence ID" value="ENSP00000355348.3"/>
    <property type="RefSeq nucleotide sequence ID" value="NM_013436.5"/>
    <property type="RefSeq protein sequence ID" value="NP_038464.1"/>
</dbReference>
<dbReference type="UCSC" id="uc002upb.5">
    <molecule id="Q9Y2A7-1"/>
    <property type="organism name" value="human"/>
</dbReference>
<dbReference type="AGR" id="HGNC:7666"/>
<dbReference type="CTD" id="10787"/>
<dbReference type="DisGeNET" id="10787"/>
<dbReference type="GeneCards" id="NCKAP1"/>
<dbReference type="HGNC" id="HGNC:7666">
    <property type="gene designation" value="NCKAP1"/>
</dbReference>
<dbReference type="HPA" id="ENSG00000061676">
    <property type="expression patterns" value="Low tissue specificity"/>
</dbReference>
<dbReference type="MalaCards" id="NCKAP1"/>
<dbReference type="MIM" id="604891">
    <property type="type" value="gene"/>
</dbReference>
<dbReference type="neXtProt" id="NX_Q9Y2A7"/>
<dbReference type="OpenTargets" id="ENSG00000061676"/>
<dbReference type="PharmGKB" id="PA31468"/>
<dbReference type="VEuPathDB" id="HostDB:ENSG00000061676"/>
<dbReference type="eggNOG" id="KOG1917">
    <property type="taxonomic scope" value="Eukaryota"/>
</dbReference>
<dbReference type="GeneTree" id="ENSGT00390000016619"/>
<dbReference type="HOGENOM" id="CLU_004450_0_0_1"/>
<dbReference type="InParanoid" id="Q9Y2A7"/>
<dbReference type="OMA" id="INVWEYT"/>
<dbReference type="OrthoDB" id="548214at2759"/>
<dbReference type="PAN-GO" id="Q9Y2A7">
    <property type="GO annotations" value="6 GO annotations based on evolutionary models"/>
</dbReference>
<dbReference type="PhylomeDB" id="Q9Y2A7"/>
<dbReference type="TreeFam" id="TF313683"/>
<dbReference type="PathwayCommons" id="Q9Y2A7"/>
<dbReference type="Reactome" id="R-HSA-2029482">
    <property type="pathway name" value="Regulation of actin dynamics for phagocytic cup formation"/>
</dbReference>
<dbReference type="Reactome" id="R-HSA-4420097">
    <property type="pathway name" value="VEGFA-VEGFR2 Pathway"/>
</dbReference>
<dbReference type="Reactome" id="R-HSA-5663213">
    <property type="pathway name" value="RHO GTPases Activate WASPs and WAVEs"/>
</dbReference>
<dbReference type="Reactome" id="R-HSA-9013149">
    <property type="pathway name" value="RAC1 GTPase cycle"/>
</dbReference>
<dbReference type="Reactome" id="R-HSA-9013404">
    <property type="pathway name" value="RAC2 GTPase cycle"/>
</dbReference>
<dbReference type="Reactome" id="R-HSA-9013423">
    <property type="pathway name" value="RAC3 GTPase cycle"/>
</dbReference>
<dbReference type="Reactome" id="R-HSA-9664422">
    <property type="pathway name" value="FCGR3A-mediated phagocytosis"/>
</dbReference>
<dbReference type="SignaLink" id="Q9Y2A7"/>
<dbReference type="SIGNOR" id="Q9Y2A7"/>
<dbReference type="BioGRID-ORCS" id="10787">
    <property type="hits" value="422 hits in 1162 CRISPR screens"/>
</dbReference>
<dbReference type="CD-CODE" id="FB4E32DD">
    <property type="entry name" value="Presynaptic clusters and postsynaptic densities"/>
</dbReference>
<dbReference type="ChiTaRS" id="NCKAP1">
    <property type="organism name" value="human"/>
</dbReference>
<dbReference type="EvolutionaryTrace" id="Q9Y2A7"/>
<dbReference type="GeneWiki" id="NCKAP1"/>
<dbReference type="GenomeRNAi" id="10787"/>
<dbReference type="Pharos" id="Q9Y2A7">
    <property type="development level" value="Tbio"/>
</dbReference>
<dbReference type="PRO" id="PR:Q9Y2A7"/>
<dbReference type="Proteomes" id="UP000005640">
    <property type="component" value="Chromosome 2"/>
</dbReference>
<dbReference type="RNAct" id="Q9Y2A7">
    <property type="molecule type" value="protein"/>
</dbReference>
<dbReference type="Bgee" id="ENSG00000061676">
    <property type="expression patterns" value="Expressed in seminal vesicle and 211 other cell types or tissues"/>
</dbReference>
<dbReference type="GO" id="GO:0005829">
    <property type="term" value="C:cytosol"/>
    <property type="evidence" value="ECO:0000304"/>
    <property type="project" value="Reactome"/>
</dbReference>
<dbReference type="GO" id="GO:0070062">
    <property type="term" value="C:extracellular exosome"/>
    <property type="evidence" value="ECO:0007005"/>
    <property type="project" value="UniProtKB"/>
</dbReference>
<dbReference type="GO" id="GO:0031941">
    <property type="term" value="C:filamentous actin"/>
    <property type="evidence" value="ECO:0000250"/>
    <property type="project" value="BHF-UCL"/>
</dbReference>
<dbReference type="GO" id="GO:0005925">
    <property type="term" value="C:focal adhesion"/>
    <property type="evidence" value="ECO:0007005"/>
    <property type="project" value="UniProtKB"/>
</dbReference>
<dbReference type="GO" id="GO:0030027">
    <property type="term" value="C:lamellipodium"/>
    <property type="evidence" value="ECO:0000250"/>
    <property type="project" value="BHF-UCL"/>
</dbReference>
<dbReference type="GO" id="GO:0031258">
    <property type="term" value="C:lamellipodium membrane"/>
    <property type="evidence" value="ECO:0007669"/>
    <property type="project" value="UniProtKB-SubCell"/>
</dbReference>
<dbReference type="GO" id="GO:0098794">
    <property type="term" value="C:postsynapse"/>
    <property type="evidence" value="ECO:0007669"/>
    <property type="project" value="Ensembl"/>
</dbReference>
<dbReference type="GO" id="GO:0001726">
    <property type="term" value="C:ruffle"/>
    <property type="evidence" value="ECO:0000250"/>
    <property type="project" value="BHF-UCL"/>
</dbReference>
<dbReference type="GO" id="GO:0031209">
    <property type="term" value="C:SCAR complex"/>
    <property type="evidence" value="ECO:0000314"/>
    <property type="project" value="UniProtKB"/>
</dbReference>
<dbReference type="GO" id="GO:0045176">
    <property type="term" value="P:apical protein localization"/>
    <property type="evidence" value="ECO:0007669"/>
    <property type="project" value="Ensembl"/>
</dbReference>
<dbReference type="GO" id="GO:0006915">
    <property type="term" value="P:apoptotic process"/>
    <property type="evidence" value="ECO:0000304"/>
    <property type="project" value="ProtInc"/>
</dbReference>
<dbReference type="GO" id="GO:0045175">
    <property type="term" value="P:basal protein localization"/>
    <property type="evidence" value="ECO:0007669"/>
    <property type="project" value="Ensembl"/>
</dbReference>
<dbReference type="GO" id="GO:0016477">
    <property type="term" value="P:cell migration"/>
    <property type="evidence" value="ECO:0000318"/>
    <property type="project" value="GO_Central"/>
</dbReference>
<dbReference type="GO" id="GO:0042074">
    <property type="term" value="P:cell migration involved in gastrulation"/>
    <property type="evidence" value="ECO:0007669"/>
    <property type="project" value="Ensembl"/>
</dbReference>
<dbReference type="GO" id="GO:0000902">
    <property type="term" value="P:cell morphogenesis"/>
    <property type="evidence" value="ECO:0000318"/>
    <property type="project" value="GO_Central"/>
</dbReference>
<dbReference type="GO" id="GO:0030031">
    <property type="term" value="P:cell projection assembly"/>
    <property type="evidence" value="ECO:0000318"/>
    <property type="project" value="GO_Central"/>
</dbReference>
<dbReference type="GO" id="GO:0007417">
    <property type="term" value="P:central nervous system development"/>
    <property type="evidence" value="ECO:0000304"/>
    <property type="project" value="ProtInc"/>
</dbReference>
<dbReference type="GO" id="GO:0030866">
    <property type="term" value="P:cortical actin cytoskeleton organization"/>
    <property type="evidence" value="ECO:0000318"/>
    <property type="project" value="GO_Central"/>
</dbReference>
<dbReference type="GO" id="GO:0010172">
    <property type="term" value="P:embryonic body morphogenesis"/>
    <property type="evidence" value="ECO:0007669"/>
    <property type="project" value="Ensembl"/>
</dbReference>
<dbReference type="GO" id="GO:0048617">
    <property type="term" value="P:embryonic foregut morphogenesis"/>
    <property type="evidence" value="ECO:0007669"/>
    <property type="project" value="Ensembl"/>
</dbReference>
<dbReference type="GO" id="GO:0035050">
    <property type="term" value="P:embryonic heart tube development"/>
    <property type="evidence" value="ECO:0007669"/>
    <property type="project" value="Ensembl"/>
</dbReference>
<dbReference type="GO" id="GO:0007492">
    <property type="term" value="P:endoderm development"/>
    <property type="evidence" value="ECO:0007669"/>
    <property type="project" value="Ensembl"/>
</dbReference>
<dbReference type="GO" id="GO:0030950">
    <property type="term" value="P:establishment or maintenance of actin cytoskeleton polarity"/>
    <property type="evidence" value="ECO:0007669"/>
    <property type="project" value="Ensembl"/>
</dbReference>
<dbReference type="GO" id="GO:0001701">
    <property type="term" value="P:in utero embryonic development"/>
    <property type="evidence" value="ECO:0007669"/>
    <property type="project" value="Ensembl"/>
</dbReference>
<dbReference type="GO" id="GO:0030032">
    <property type="term" value="P:lamellipodium assembly"/>
    <property type="evidence" value="ECO:0007669"/>
    <property type="project" value="Ensembl"/>
</dbReference>
<dbReference type="GO" id="GO:0008078">
    <property type="term" value="P:mesodermal cell migration"/>
    <property type="evidence" value="ECO:0007669"/>
    <property type="project" value="Ensembl"/>
</dbReference>
<dbReference type="GO" id="GO:0001843">
    <property type="term" value="P:neural tube closure"/>
    <property type="evidence" value="ECO:0007669"/>
    <property type="project" value="Ensembl"/>
</dbReference>
<dbReference type="GO" id="GO:0048812">
    <property type="term" value="P:neuron projection morphogenesis"/>
    <property type="evidence" value="ECO:0000318"/>
    <property type="project" value="GO_Central"/>
</dbReference>
<dbReference type="GO" id="GO:0048570">
    <property type="term" value="P:notochord morphogenesis"/>
    <property type="evidence" value="ECO:0007669"/>
    <property type="project" value="Ensembl"/>
</dbReference>
<dbReference type="GO" id="GO:0048340">
    <property type="term" value="P:paraxial mesoderm morphogenesis"/>
    <property type="evidence" value="ECO:0007669"/>
    <property type="project" value="Ensembl"/>
</dbReference>
<dbReference type="GO" id="GO:0030838">
    <property type="term" value="P:positive regulation of actin filament polymerization"/>
    <property type="evidence" value="ECO:0000250"/>
    <property type="project" value="BHF-UCL"/>
</dbReference>
<dbReference type="GO" id="GO:2000601">
    <property type="term" value="P:positive regulation of Arp2/3 complex-mediated actin nucleation"/>
    <property type="evidence" value="ECO:0000314"/>
    <property type="project" value="UniProtKB"/>
</dbReference>
<dbReference type="GO" id="GO:0010592">
    <property type="term" value="P:positive regulation of lamellipodium assembly"/>
    <property type="evidence" value="ECO:0000314"/>
    <property type="project" value="ARUK-UCL"/>
</dbReference>
<dbReference type="GO" id="GO:0050821">
    <property type="term" value="P:protein stabilization"/>
    <property type="evidence" value="ECO:0007669"/>
    <property type="project" value="Ensembl"/>
</dbReference>
<dbReference type="GO" id="GO:0016601">
    <property type="term" value="P:Rac protein signal transduction"/>
    <property type="evidence" value="ECO:0000314"/>
    <property type="project" value="UniProtKB"/>
</dbReference>
<dbReference type="GO" id="GO:0032880">
    <property type="term" value="P:regulation of protein localization"/>
    <property type="evidence" value="ECO:0007669"/>
    <property type="project" value="Ensembl"/>
</dbReference>
<dbReference type="GO" id="GO:0001756">
    <property type="term" value="P:somitogenesis"/>
    <property type="evidence" value="ECO:0007669"/>
    <property type="project" value="Ensembl"/>
</dbReference>
<dbReference type="GO" id="GO:0007354">
    <property type="term" value="P:zygotic determination of anterior/posterior axis, embryo"/>
    <property type="evidence" value="ECO:0007669"/>
    <property type="project" value="Ensembl"/>
</dbReference>
<dbReference type="InterPro" id="IPR019137">
    <property type="entry name" value="Nck-associated_protein-1"/>
</dbReference>
<dbReference type="PANTHER" id="PTHR12093">
    <property type="entry name" value="NCK-ASSOCIATED PROTEIN 1"/>
    <property type="match status" value="1"/>
</dbReference>
<dbReference type="PANTHER" id="PTHR12093:SF11">
    <property type="entry name" value="NCK-ASSOCIATED PROTEIN 1"/>
    <property type="match status" value="1"/>
</dbReference>
<dbReference type="Pfam" id="PF09735">
    <property type="entry name" value="Nckap1"/>
    <property type="match status" value="1"/>
</dbReference>
<protein>
    <recommendedName>
        <fullName>Nck-associated protein 1</fullName>
        <shortName>NAP 1</shortName>
    </recommendedName>
    <alternativeName>
        <fullName>Membrane-associated protein HEM-2</fullName>
    </alternativeName>
    <alternativeName>
        <fullName>p125Nap1</fullName>
    </alternativeName>
</protein>
<gene>
    <name type="primary">NCKAP1</name>
    <name type="synonym">HEM2</name>
    <name type="synonym">KIAA0587</name>
    <name type="synonym">NAP1</name>
</gene>